<proteinExistence type="evidence at protein level"/>
<comment type="function">
    <text evidence="4">Together with ABI5, PYL5 and SAPK2, is part of an abscisic acid (ABA) signaling unit that modulates seed germination and early seedling growth.</text>
</comment>
<comment type="catalytic activity">
    <reaction evidence="7">
        <text>O-phospho-L-seryl-[protein] + H2O = L-seryl-[protein] + phosphate</text>
        <dbReference type="Rhea" id="RHEA:20629"/>
        <dbReference type="Rhea" id="RHEA-COMP:9863"/>
        <dbReference type="Rhea" id="RHEA-COMP:11604"/>
        <dbReference type="ChEBI" id="CHEBI:15377"/>
        <dbReference type="ChEBI" id="CHEBI:29999"/>
        <dbReference type="ChEBI" id="CHEBI:43474"/>
        <dbReference type="ChEBI" id="CHEBI:83421"/>
        <dbReference type="EC" id="3.1.3.16"/>
    </reaction>
</comment>
<comment type="catalytic activity">
    <reaction evidence="7">
        <text>O-phospho-L-threonyl-[protein] + H2O = L-threonyl-[protein] + phosphate</text>
        <dbReference type="Rhea" id="RHEA:47004"/>
        <dbReference type="Rhea" id="RHEA-COMP:11060"/>
        <dbReference type="Rhea" id="RHEA-COMP:11605"/>
        <dbReference type="ChEBI" id="CHEBI:15377"/>
        <dbReference type="ChEBI" id="CHEBI:30013"/>
        <dbReference type="ChEBI" id="CHEBI:43474"/>
        <dbReference type="ChEBI" id="CHEBI:61977"/>
        <dbReference type="EC" id="3.1.3.16"/>
    </reaction>
</comment>
<comment type="cofactor">
    <cofactor evidence="1">
        <name>Mg(2+)</name>
        <dbReference type="ChEBI" id="CHEBI:18420"/>
    </cofactor>
    <cofactor evidence="1">
        <name>Mn(2+)</name>
        <dbReference type="ChEBI" id="CHEBI:29035"/>
    </cofactor>
    <text evidence="1">Binds 2 magnesium or manganese ions per subunit.</text>
</comment>
<comment type="subunit">
    <text evidence="4 5">Interacts with PYL5 and SAPK2. Binding to PYL5 is dependent on the presence of abscisic acid (ABA) (PubMed:22071266). Interacts with PYL3, PYL5 and PYL9. Binding to PYL5 and PYL9 is dependent on the presence of ABA (PubMed:26362328).</text>
</comment>
<comment type="subcellular location">
    <subcellularLocation>
        <location evidence="4 5">Nucleus</location>
    </subcellularLocation>
</comment>
<comment type="similarity">
    <text evidence="7">Belongs to the PP2C family.</text>
</comment>
<evidence type="ECO:0000250" key="1"/>
<evidence type="ECO:0000255" key="2">
    <source>
        <dbReference type="PROSITE-ProRule" id="PRU01082"/>
    </source>
</evidence>
<evidence type="ECO:0000256" key="3">
    <source>
        <dbReference type="SAM" id="MobiDB-lite"/>
    </source>
</evidence>
<evidence type="ECO:0000269" key="4">
    <source>
    </source>
</evidence>
<evidence type="ECO:0000269" key="5">
    <source>
    </source>
</evidence>
<evidence type="ECO:0000303" key="6">
    <source>
    </source>
</evidence>
<evidence type="ECO:0000305" key="7"/>
<evidence type="ECO:0000312" key="8">
    <source>
        <dbReference type="EMBL" id="AAP06902.1"/>
    </source>
</evidence>
<evidence type="ECO:0000312" key="9">
    <source>
        <dbReference type="EMBL" id="AAP06912.1"/>
    </source>
</evidence>
<evidence type="ECO:0000312" key="10">
    <source>
        <dbReference type="EMBL" id="ABF95181.1"/>
    </source>
</evidence>
<evidence type="ECO:0000312" key="11">
    <source>
        <dbReference type="EMBL" id="BAS83449.1"/>
    </source>
</evidence>
<evidence type="ECO:0000312" key="12">
    <source>
        <dbReference type="EMBL" id="EAZ26392.1"/>
    </source>
</evidence>
<reference key="1">
    <citation type="journal article" date="2005" name="Genome Res.">
        <title>Sequence, annotation, and analysis of synteny between rice chromosome 3 and diverged grass species.</title>
        <authorList>
            <consortium name="The rice chromosome 3 sequencing consortium"/>
            <person name="Buell C.R."/>
            <person name="Yuan Q."/>
            <person name="Ouyang S."/>
            <person name="Liu J."/>
            <person name="Zhu W."/>
            <person name="Wang A."/>
            <person name="Maiti R."/>
            <person name="Haas B."/>
            <person name="Wortman J."/>
            <person name="Pertea M."/>
            <person name="Jones K.M."/>
            <person name="Kim M."/>
            <person name="Overton L."/>
            <person name="Tsitrin T."/>
            <person name="Fadrosh D."/>
            <person name="Bera J."/>
            <person name="Weaver B."/>
            <person name="Jin S."/>
            <person name="Johri S."/>
            <person name="Reardon M."/>
            <person name="Webb K."/>
            <person name="Hill J."/>
            <person name="Moffat K."/>
            <person name="Tallon L."/>
            <person name="Van Aken S."/>
            <person name="Lewis M."/>
            <person name="Utterback T."/>
            <person name="Feldblyum T."/>
            <person name="Zismann V."/>
            <person name="Iobst S."/>
            <person name="Hsiao J."/>
            <person name="de Vazeille A.R."/>
            <person name="Salzberg S.L."/>
            <person name="White O."/>
            <person name="Fraser C.M."/>
            <person name="Yu Y."/>
            <person name="Kim H."/>
            <person name="Rambo T."/>
            <person name="Currie J."/>
            <person name="Collura K."/>
            <person name="Kernodle-Thompson S."/>
            <person name="Wei F."/>
            <person name="Kudrna K."/>
            <person name="Ammiraju J.S.S."/>
            <person name="Luo M."/>
            <person name="Goicoechea J.L."/>
            <person name="Wing R.A."/>
            <person name="Henry D."/>
            <person name="Oates R."/>
            <person name="Palmer M."/>
            <person name="Pries G."/>
            <person name="Saski C."/>
            <person name="Simmons J."/>
            <person name="Soderlund C."/>
            <person name="Nelson W."/>
            <person name="de la Bastide M."/>
            <person name="Spiegel L."/>
            <person name="Nascimento L."/>
            <person name="Huang E."/>
            <person name="Preston R."/>
            <person name="Zutavern T."/>
            <person name="Palmer L."/>
            <person name="O'Shaughnessy A."/>
            <person name="Dike S."/>
            <person name="McCombie W.R."/>
            <person name="Minx P."/>
            <person name="Cordum H."/>
            <person name="Wilson R."/>
            <person name="Jin W."/>
            <person name="Lee H.R."/>
            <person name="Jiang J."/>
            <person name="Jackson S."/>
        </authorList>
    </citation>
    <scope>NUCLEOTIDE SEQUENCE [LARGE SCALE GENOMIC DNA]</scope>
    <source>
        <strain>cv. Nipponbare</strain>
    </source>
</reference>
<reference key="2">
    <citation type="journal article" date="2005" name="Nature">
        <title>The map-based sequence of the rice genome.</title>
        <authorList>
            <consortium name="International rice genome sequencing project (IRGSP)"/>
        </authorList>
    </citation>
    <scope>NUCLEOTIDE SEQUENCE [LARGE SCALE GENOMIC DNA]</scope>
    <source>
        <strain>cv. Nipponbare</strain>
    </source>
</reference>
<reference key="3">
    <citation type="journal article" date="2008" name="Nucleic Acids Res.">
        <title>The rice annotation project database (RAP-DB): 2008 update.</title>
        <authorList>
            <consortium name="The rice annotation project (RAP)"/>
        </authorList>
    </citation>
    <scope>GENOME REANNOTATION</scope>
    <source>
        <strain>cv. Nipponbare</strain>
    </source>
</reference>
<reference key="4">
    <citation type="journal article" date="2013" name="Rice">
        <title>Improvement of the Oryza sativa Nipponbare reference genome using next generation sequence and optical map data.</title>
        <authorList>
            <person name="Kawahara Y."/>
            <person name="de la Bastide M."/>
            <person name="Hamilton J.P."/>
            <person name="Kanamori H."/>
            <person name="McCombie W.R."/>
            <person name="Ouyang S."/>
            <person name="Schwartz D.C."/>
            <person name="Tanaka T."/>
            <person name="Wu J."/>
            <person name="Zhou S."/>
            <person name="Childs K.L."/>
            <person name="Davidson R.M."/>
            <person name="Lin H."/>
            <person name="Quesada-Ocampo L."/>
            <person name="Vaillancourt B."/>
            <person name="Sakai H."/>
            <person name="Lee S.S."/>
            <person name="Kim J."/>
            <person name="Numa H."/>
            <person name="Itoh T."/>
            <person name="Buell C.R."/>
            <person name="Matsumoto T."/>
        </authorList>
    </citation>
    <scope>GENOME REANNOTATION</scope>
    <source>
        <strain>cv. Nipponbare</strain>
    </source>
</reference>
<reference key="5">
    <citation type="journal article" date="2005" name="PLoS Biol.">
        <title>The genomes of Oryza sativa: a history of duplications.</title>
        <authorList>
            <person name="Yu J."/>
            <person name="Wang J."/>
            <person name="Lin W."/>
            <person name="Li S."/>
            <person name="Li H."/>
            <person name="Zhou J."/>
            <person name="Ni P."/>
            <person name="Dong W."/>
            <person name="Hu S."/>
            <person name="Zeng C."/>
            <person name="Zhang J."/>
            <person name="Zhang Y."/>
            <person name="Li R."/>
            <person name="Xu Z."/>
            <person name="Li S."/>
            <person name="Li X."/>
            <person name="Zheng H."/>
            <person name="Cong L."/>
            <person name="Lin L."/>
            <person name="Yin J."/>
            <person name="Geng J."/>
            <person name="Li G."/>
            <person name="Shi J."/>
            <person name="Liu J."/>
            <person name="Lv H."/>
            <person name="Li J."/>
            <person name="Wang J."/>
            <person name="Deng Y."/>
            <person name="Ran L."/>
            <person name="Shi X."/>
            <person name="Wang X."/>
            <person name="Wu Q."/>
            <person name="Li C."/>
            <person name="Ren X."/>
            <person name="Wang J."/>
            <person name="Wang X."/>
            <person name="Li D."/>
            <person name="Liu D."/>
            <person name="Zhang X."/>
            <person name="Ji Z."/>
            <person name="Zhao W."/>
            <person name="Sun Y."/>
            <person name="Zhang Z."/>
            <person name="Bao J."/>
            <person name="Han Y."/>
            <person name="Dong L."/>
            <person name="Ji J."/>
            <person name="Chen P."/>
            <person name="Wu S."/>
            <person name="Liu J."/>
            <person name="Xiao Y."/>
            <person name="Bu D."/>
            <person name="Tan J."/>
            <person name="Yang L."/>
            <person name="Ye C."/>
            <person name="Zhang J."/>
            <person name="Xu J."/>
            <person name="Zhou Y."/>
            <person name="Yu Y."/>
            <person name="Zhang B."/>
            <person name="Zhuang S."/>
            <person name="Wei H."/>
            <person name="Liu B."/>
            <person name="Lei M."/>
            <person name="Yu H."/>
            <person name="Li Y."/>
            <person name="Xu H."/>
            <person name="Wei S."/>
            <person name="He X."/>
            <person name="Fang L."/>
            <person name="Zhang Z."/>
            <person name="Zhang Y."/>
            <person name="Huang X."/>
            <person name="Su Z."/>
            <person name="Tong W."/>
            <person name="Li J."/>
            <person name="Tong Z."/>
            <person name="Li S."/>
            <person name="Ye J."/>
            <person name="Wang L."/>
            <person name="Fang L."/>
            <person name="Lei T."/>
            <person name="Chen C.-S."/>
            <person name="Chen H.-C."/>
            <person name="Xu Z."/>
            <person name="Li H."/>
            <person name="Huang H."/>
            <person name="Zhang F."/>
            <person name="Xu H."/>
            <person name="Li N."/>
            <person name="Zhao C."/>
            <person name="Li S."/>
            <person name="Dong L."/>
            <person name="Huang Y."/>
            <person name="Li L."/>
            <person name="Xi Y."/>
            <person name="Qi Q."/>
            <person name="Li W."/>
            <person name="Zhang B."/>
            <person name="Hu W."/>
            <person name="Zhang Y."/>
            <person name="Tian X."/>
            <person name="Jiao Y."/>
            <person name="Liang X."/>
            <person name="Jin J."/>
            <person name="Gao L."/>
            <person name="Zheng W."/>
            <person name="Hao B."/>
            <person name="Liu S.-M."/>
            <person name="Wang W."/>
            <person name="Yuan L."/>
            <person name="Cao M."/>
            <person name="McDermott J."/>
            <person name="Samudrala R."/>
            <person name="Wang J."/>
            <person name="Wong G.K.-S."/>
            <person name="Yang H."/>
        </authorList>
    </citation>
    <scope>NUCLEOTIDE SEQUENCE [LARGE SCALE GENOMIC DNA]</scope>
    <source>
        <strain>cv. Nipponbare</strain>
    </source>
</reference>
<reference key="6">
    <citation type="journal article" date="2003" name="Science">
        <title>Collection, mapping, and annotation of over 28,000 cDNA clones from japonica rice.</title>
        <authorList>
            <consortium name="The rice full-length cDNA consortium"/>
        </authorList>
    </citation>
    <scope>NUCLEOTIDE SEQUENCE [LARGE SCALE MRNA]</scope>
    <source>
        <strain>cv. Nipponbare</strain>
    </source>
</reference>
<reference key="7">
    <citation type="journal article" date="2008" name="BMC Genomics">
        <title>Genome-wide and expression analysis of protein phosphatase 2C in rice and Arabidopsis.</title>
        <authorList>
            <person name="Xue T."/>
            <person name="Wang D."/>
            <person name="Zhang S."/>
            <person name="Ehlting J."/>
            <person name="Ni F."/>
            <person name="Jacab S."/>
            <person name="Zheng C."/>
            <person name="Zhong Y."/>
        </authorList>
    </citation>
    <scope>GENE FAMILY</scope>
    <scope>NOMENCLATURE</scope>
</reference>
<reference key="8">
    <citation type="journal article" date="2012" name="J. Exp. Bot.">
        <title>A rice orthologue of the ABA receptor, OsPYL/RCAR5, is a positive regulator of the ABA signal transduction pathway in seed germination and early seedling growth.</title>
        <authorList>
            <person name="Kim H."/>
            <person name="Hwang H."/>
            <person name="Hong J.W."/>
            <person name="Lee Y.N."/>
            <person name="Ahn I.P."/>
            <person name="Yoon I.S."/>
            <person name="Yoo S.D."/>
            <person name="Lee S."/>
            <person name="Lee S.C."/>
            <person name="Kim B.G."/>
        </authorList>
    </citation>
    <scope>FUNCTION</scope>
    <scope>INTERACTION WITH PYL5 AND SAPK2</scope>
    <scope>SUBCELLULAR LOCATION</scope>
</reference>
<reference key="9">
    <citation type="journal article" date="2015" name="Rice">
        <title>Characterization and functional analysis of pyrabactin resistance-like abscisic acid receptor family in rice.</title>
        <authorList>
            <person name="Tian X."/>
            <person name="Wang Z."/>
            <person name="Li X."/>
            <person name="Lv T."/>
            <person name="Liu H."/>
            <person name="Wang L."/>
            <person name="Niu H."/>
            <person name="Bu Q."/>
        </authorList>
    </citation>
    <scope>INTERACTION WITH PYL3; PYL5 AND PYL9</scope>
    <scope>SUBCELLULAR LOCATION</scope>
    <scope>INDUCTION</scope>
</reference>
<dbReference type="EC" id="3.1.3.16" evidence="7"/>
<dbReference type="EMBL" id="AC135209">
    <property type="protein sequence ID" value="AAP06912.1"/>
    <property type="molecule type" value="Genomic_DNA"/>
</dbReference>
<dbReference type="EMBL" id="AC139168">
    <property type="protein sequence ID" value="AAP06902.1"/>
    <property type="molecule type" value="Genomic_DNA"/>
</dbReference>
<dbReference type="EMBL" id="DP000009">
    <property type="protein sequence ID" value="ABF95181.1"/>
    <property type="molecule type" value="Genomic_DNA"/>
</dbReference>
<dbReference type="EMBL" id="AP008209">
    <property type="protein sequence ID" value="BAF11588.1"/>
    <property type="molecule type" value="Genomic_DNA"/>
</dbReference>
<dbReference type="EMBL" id="AP014959">
    <property type="protein sequence ID" value="BAS83449.1"/>
    <property type="molecule type" value="Genomic_DNA"/>
</dbReference>
<dbReference type="EMBL" id="CM000140">
    <property type="protein sequence ID" value="EAZ26392.1"/>
    <property type="molecule type" value="Genomic_DNA"/>
</dbReference>
<dbReference type="EMBL" id="AK069274">
    <property type="protein sequence ID" value="BAG91354.1"/>
    <property type="molecule type" value="mRNA"/>
</dbReference>
<dbReference type="RefSeq" id="XP_015628825.1">
    <property type="nucleotide sequence ID" value="XM_015773339.1"/>
</dbReference>
<dbReference type="SMR" id="Q84JI0"/>
<dbReference type="FunCoup" id="Q84JI0">
    <property type="interactions" value="189"/>
</dbReference>
<dbReference type="STRING" id="39947.Q84JI0"/>
<dbReference type="PaxDb" id="39947-Q84JI0"/>
<dbReference type="EnsemblPlants" id="Os03t0268600-01">
    <property type="protein sequence ID" value="Os03t0268600-01"/>
    <property type="gene ID" value="Os03g0268600"/>
</dbReference>
<dbReference type="Gramene" id="Os03t0268600-01">
    <property type="protein sequence ID" value="Os03t0268600-01"/>
    <property type="gene ID" value="Os03g0268600"/>
</dbReference>
<dbReference type="KEGG" id="dosa:Os03g0268600"/>
<dbReference type="eggNOG" id="KOG0698">
    <property type="taxonomic scope" value="Eukaryota"/>
</dbReference>
<dbReference type="HOGENOM" id="CLU_013173_20_0_1"/>
<dbReference type="InParanoid" id="Q84JI0"/>
<dbReference type="OMA" id="SIGYHYC"/>
<dbReference type="OrthoDB" id="10264738at2759"/>
<dbReference type="PlantReactome" id="R-OSA-3899351">
    <property type="pathway name" value="Abscisic acid (ABA) mediated signaling"/>
</dbReference>
<dbReference type="Proteomes" id="UP000000763">
    <property type="component" value="Chromosome 3"/>
</dbReference>
<dbReference type="Proteomes" id="UP000007752">
    <property type="component" value="Chromosome 3"/>
</dbReference>
<dbReference type="Proteomes" id="UP000059680">
    <property type="component" value="Chromosome 3"/>
</dbReference>
<dbReference type="GO" id="GO:0005634">
    <property type="term" value="C:nucleus"/>
    <property type="evidence" value="ECO:0000314"/>
    <property type="project" value="UniProtKB"/>
</dbReference>
<dbReference type="GO" id="GO:0046872">
    <property type="term" value="F:metal ion binding"/>
    <property type="evidence" value="ECO:0007669"/>
    <property type="project" value="UniProtKB-KW"/>
</dbReference>
<dbReference type="GO" id="GO:0004722">
    <property type="term" value="F:protein serine/threonine phosphatase activity"/>
    <property type="evidence" value="ECO:0000318"/>
    <property type="project" value="GO_Central"/>
</dbReference>
<dbReference type="GO" id="GO:0009738">
    <property type="term" value="P:abscisic acid-activated signaling pathway"/>
    <property type="evidence" value="ECO:0000315"/>
    <property type="project" value="UniProtKB"/>
</dbReference>
<dbReference type="GO" id="GO:1902531">
    <property type="term" value="P:regulation of intracellular signal transduction"/>
    <property type="evidence" value="ECO:0000318"/>
    <property type="project" value="GO_Central"/>
</dbReference>
<dbReference type="GO" id="GO:0009845">
    <property type="term" value="P:seed germination"/>
    <property type="evidence" value="ECO:0000315"/>
    <property type="project" value="UniProtKB"/>
</dbReference>
<dbReference type="GO" id="GO:0090351">
    <property type="term" value="P:seedling development"/>
    <property type="evidence" value="ECO:0000315"/>
    <property type="project" value="UniProtKB"/>
</dbReference>
<dbReference type="CDD" id="cd00143">
    <property type="entry name" value="PP2Cc"/>
    <property type="match status" value="1"/>
</dbReference>
<dbReference type="FunFam" id="3.60.40.10:FF:000046">
    <property type="entry name" value="Probable protein phosphatase 2C 9"/>
    <property type="match status" value="1"/>
</dbReference>
<dbReference type="Gene3D" id="3.60.40.10">
    <property type="entry name" value="PPM-type phosphatase domain"/>
    <property type="match status" value="1"/>
</dbReference>
<dbReference type="InterPro" id="IPR015655">
    <property type="entry name" value="PP2C"/>
</dbReference>
<dbReference type="InterPro" id="IPR000222">
    <property type="entry name" value="PP2C_BS"/>
</dbReference>
<dbReference type="InterPro" id="IPR036457">
    <property type="entry name" value="PPM-type-like_dom_sf"/>
</dbReference>
<dbReference type="InterPro" id="IPR001932">
    <property type="entry name" value="PPM-type_phosphatase-like_dom"/>
</dbReference>
<dbReference type="PANTHER" id="PTHR47992">
    <property type="entry name" value="PROTEIN PHOSPHATASE"/>
    <property type="match status" value="1"/>
</dbReference>
<dbReference type="Pfam" id="PF00481">
    <property type="entry name" value="PP2C"/>
    <property type="match status" value="1"/>
</dbReference>
<dbReference type="SMART" id="SM00332">
    <property type="entry name" value="PP2Cc"/>
    <property type="match status" value="1"/>
</dbReference>
<dbReference type="SUPFAM" id="SSF81606">
    <property type="entry name" value="PP2C-like"/>
    <property type="match status" value="1"/>
</dbReference>
<dbReference type="PROSITE" id="PS01032">
    <property type="entry name" value="PPM_1"/>
    <property type="match status" value="1"/>
</dbReference>
<dbReference type="PROSITE" id="PS51746">
    <property type="entry name" value="PPM_2"/>
    <property type="match status" value="1"/>
</dbReference>
<keyword id="KW-0938">Abscisic acid signaling pathway</keyword>
<keyword id="KW-0378">Hydrolase</keyword>
<keyword id="KW-0460">Magnesium</keyword>
<keyword id="KW-0464">Manganese</keyword>
<keyword id="KW-0479">Metal-binding</keyword>
<keyword id="KW-0539">Nucleus</keyword>
<keyword id="KW-0904">Protein phosphatase</keyword>
<keyword id="KW-1185">Reference proteome</keyword>
<organism>
    <name type="scientific">Oryza sativa subsp. japonica</name>
    <name type="common">Rice</name>
    <dbReference type="NCBI Taxonomy" id="39947"/>
    <lineage>
        <taxon>Eukaryota</taxon>
        <taxon>Viridiplantae</taxon>
        <taxon>Streptophyta</taxon>
        <taxon>Embryophyta</taxon>
        <taxon>Tracheophyta</taxon>
        <taxon>Spermatophyta</taxon>
        <taxon>Magnoliopsida</taxon>
        <taxon>Liliopsida</taxon>
        <taxon>Poales</taxon>
        <taxon>Poaceae</taxon>
        <taxon>BOP clade</taxon>
        <taxon>Oryzoideae</taxon>
        <taxon>Oryzeae</taxon>
        <taxon>Oryzinae</taxon>
        <taxon>Oryza</taxon>
        <taxon>Oryza sativa</taxon>
    </lineage>
</organism>
<sequence>MAEICCEVVAGSSSEGKGPECDTGSRAARRRRMEIRRLRVVAERGAEEETSGKRRRLDGGGGEASTDEEDREVERARYGFTSVCGRRRDMEDSVSACPGFLPGHHFFGVFDGHGCSHVATSCGQRMHEIVVDEAGAAAGSAGLDEEARWRGVMERSFARMDAEAVASSRGSVAPAPTCRCEMQLPKCDHVGSTAVVAVLGPRHVVVANCGDSRAVLCRGGAAIPLSCDHKPDRPDELERIHAAGGRVIFWDGARVFGMLAMSRAIGDSYLKPYVICDPEVRVMERKDGEDEFLILASDGLWDVVSNEVACNVVRACLRSSGRRERNRSSPTSNLSPRQSSSSGDEAPNDGAPSAAAGSESDEESAAEEDKACAEAAVLLTKLALARQTSDNVSVVVVNLRRRKL</sequence>
<name>P2C30_ORYSJ</name>
<accession>Q84JI0</accession>
<accession>A0A0N7KH02</accession>
<feature type="chain" id="PRO_0000363276" description="Probable protein phosphatase 2C 30">
    <location>
        <begin position="1"/>
        <end position="404"/>
    </location>
</feature>
<feature type="domain" description="PPM-type phosphatase" evidence="2">
    <location>
        <begin position="77"/>
        <end position="399"/>
    </location>
</feature>
<feature type="region of interest" description="Disordered" evidence="3">
    <location>
        <begin position="42"/>
        <end position="72"/>
    </location>
</feature>
<feature type="region of interest" description="Disordered" evidence="3">
    <location>
        <begin position="321"/>
        <end position="369"/>
    </location>
</feature>
<feature type="compositionally biased region" description="Basic and acidic residues" evidence="3">
    <location>
        <begin position="42"/>
        <end position="52"/>
    </location>
</feature>
<feature type="compositionally biased region" description="Polar residues" evidence="3">
    <location>
        <begin position="330"/>
        <end position="343"/>
    </location>
</feature>
<feature type="binding site" evidence="1">
    <location>
        <position position="111"/>
    </location>
    <ligand>
        <name>Mn(2+)</name>
        <dbReference type="ChEBI" id="CHEBI:29035"/>
        <label>1</label>
    </ligand>
</feature>
<feature type="binding site" evidence="1">
    <location>
        <position position="111"/>
    </location>
    <ligand>
        <name>Mn(2+)</name>
        <dbReference type="ChEBI" id="CHEBI:29035"/>
        <label>2</label>
    </ligand>
</feature>
<feature type="binding site" evidence="1">
    <location>
        <position position="112"/>
    </location>
    <ligand>
        <name>Mn(2+)</name>
        <dbReference type="ChEBI" id="CHEBI:29035"/>
        <label>1</label>
    </ligand>
</feature>
<feature type="binding site" evidence="1">
    <location>
        <position position="298"/>
    </location>
    <ligand>
        <name>Mn(2+)</name>
        <dbReference type="ChEBI" id="CHEBI:29035"/>
        <label>2</label>
    </ligand>
</feature>
<feature type="binding site" evidence="1">
    <location>
        <position position="390"/>
    </location>
    <ligand>
        <name>Mn(2+)</name>
        <dbReference type="ChEBI" id="CHEBI:29035"/>
        <label>2</label>
    </ligand>
</feature>
<gene>
    <name evidence="6" type="primary">PP2C30</name>
    <name evidence="11" type="ordered locus">Os03g0268600</name>
    <name evidence="10" type="ordered locus">LOC_Os03g16170</name>
    <name evidence="8" type="ORF">OJA1364E02.13</name>
    <name evidence="12" type="ORF">OsJ_009875</name>
    <name evidence="9" type="ORF">OSJNBa0071M09.4</name>
</gene>
<protein>
    <recommendedName>
        <fullName evidence="7">Probable protein phosphatase 2C 30</fullName>
        <shortName evidence="6">OsPP2C30</shortName>
        <ecNumber evidence="7">3.1.3.16</ecNumber>
    </recommendedName>
</protein>